<name>RECF_SALA4</name>
<reference key="1">
    <citation type="journal article" date="2011" name="J. Bacteriol.">
        <title>Comparative genomics of 28 Salmonella enterica isolates: evidence for CRISPR-mediated adaptive sublineage evolution.</title>
        <authorList>
            <person name="Fricke W.F."/>
            <person name="Mammel M.K."/>
            <person name="McDermott P.F."/>
            <person name="Tartera C."/>
            <person name="White D.G."/>
            <person name="Leclerc J.E."/>
            <person name="Ravel J."/>
            <person name="Cebula T.A."/>
        </authorList>
    </citation>
    <scope>NUCLEOTIDE SEQUENCE [LARGE SCALE GENOMIC DNA]</scope>
    <source>
        <strain>SL483</strain>
    </source>
</reference>
<evidence type="ECO:0000255" key="1">
    <source>
        <dbReference type="HAMAP-Rule" id="MF_00365"/>
    </source>
</evidence>
<organism>
    <name type="scientific">Salmonella agona (strain SL483)</name>
    <dbReference type="NCBI Taxonomy" id="454166"/>
    <lineage>
        <taxon>Bacteria</taxon>
        <taxon>Pseudomonadati</taxon>
        <taxon>Pseudomonadota</taxon>
        <taxon>Gammaproteobacteria</taxon>
        <taxon>Enterobacterales</taxon>
        <taxon>Enterobacteriaceae</taxon>
        <taxon>Salmonella</taxon>
    </lineage>
</organism>
<comment type="function">
    <text evidence="1">The RecF protein is involved in DNA metabolism; it is required for DNA replication and normal SOS inducibility. RecF binds preferentially to single-stranded, linear DNA. It also seems to bind ATP.</text>
</comment>
<comment type="subcellular location">
    <subcellularLocation>
        <location evidence="1">Cytoplasm</location>
    </subcellularLocation>
</comment>
<comment type="similarity">
    <text evidence="1">Belongs to the RecF family.</text>
</comment>
<keyword id="KW-0067">ATP-binding</keyword>
<keyword id="KW-0963">Cytoplasm</keyword>
<keyword id="KW-0227">DNA damage</keyword>
<keyword id="KW-0234">DNA repair</keyword>
<keyword id="KW-0235">DNA replication</keyword>
<keyword id="KW-0238">DNA-binding</keyword>
<keyword id="KW-0547">Nucleotide-binding</keyword>
<keyword id="KW-0742">SOS response</keyword>
<sequence>MSLTRLLIKDFRNIENADLALSPGFNFLVGANGSGKTSVLEAIYTLGHGRAFRSLQPGRVIRHEQEAFVLHGRLQGEERETSIGLTKDKQGDSKVRIDGTDGHKIAELAHLMPMQLITPEGFTLLNGGPKYRRAFLDWGCFHNEAGFFTAWSNLKRLLKQRNAALRQVSRYEQLRPWDKELIPLAEQISTWRAEYSSAIAQDMADTCQQFLPEFSLTFSFQRGWEKETDYADVLERSFERDRMLTYTAHGPHKADFRIRADGAPVEDTLSRGQLKLLMCALRLAQGEFLTRESGRRCLYLIDDFASELDDARRGLLASRLKATQSQVFVSAISAEHVIDMSDENSKMFTVEKGKITD</sequence>
<protein>
    <recommendedName>
        <fullName evidence="1">DNA replication and repair protein RecF</fullName>
    </recommendedName>
</protein>
<dbReference type="EMBL" id="CP001138">
    <property type="protein sequence ID" value="ACH52311.1"/>
    <property type="molecule type" value="Genomic_DNA"/>
</dbReference>
<dbReference type="RefSeq" id="WP_000060081.1">
    <property type="nucleotide sequence ID" value="NC_011149.1"/>
</dbReference>
<dbReference type="SMR" id="B5EYB2"/>
<dbReference type="KEGG" id="sea:SeAg_B4064"/>
<dbReference type="HOGENOM" id="CLU_040267_0_0_6"/>
<dbReference type="Proteomes" id="UP000008819">
    <property type="component" value="Chromosome"/>
</dbReference>
<dbReference type="GO" id="GO:0005737">
    <property type="term" value="C:cytoplasm"/>
    <property type="evidence" value="ECO:0007669"/>
    <property type="project" value="UniProtKB-SubCell"/>
</dbReference>
<dbReference type="GO" id="GO:0005524">
    <property type="term" value="F:ATP binding"/>
    <property type="evidence" value="ECO:0007669"/>
    <property type="project" value="UniProtKB-UniRule"/>
</dbReference>
<dbReference type="GO" id="GO:0003697">
    <property type="term" value="F:single-stranded DNA binding"/>
    <property type="evidence" value="ECO:0007669"/>
    <property type="project" value="UniProtKB-UniRule"/>
</dbReference>
<dbReference type="GO" id="GO:0006260">
    <property type="term" value="P:DNA replication"/>
    <property type="evidence" value="ECO:0007669"/>
    <property type="project" value="UniProtKB-UniRule"/>
</dbReference>
<dbReference type="GO" id="GO:0000731">
    <property type="term" value="P:DNA synthesis involved in DNA repair"/>
    <property type="evidence" value="ECO:0007669"/>
    <property type="project" value="TreeGrafter"/>
</dbReference>
<dbReference type="GO" id="GO:0006302">
    <property type="term" value="P:double-strand break repair"/>
    <property type="evidence" value="ECO:0007669"/>
    <property type="project" value="TreeGrafter"/>
</dbReference>
<dbReference type="GO" id="GO:0009432">
    <property type="term" value="P:SOS response"/>
    <property type="evidence" value="ECO:0007669"/>
    <property type="project" value="UniProtKB-UniRule"/>
</dbReference>
<dbReference type="FunFam" id="1.20.1050.90:FF:000001">
    <property type="entry name" value="DNA replication and repair protein RecF"/>
    <property type="match status" value="1"/>
</dbReference>
<dbReference type="Gene3D" id="3.40.50.300">
    <property type="entry name" value="P-loop containing nucleotide triphosphate hydrolases"/>
    <property type="match status" value="1"/>
</dbReference>
<dbReference type="Gene3D" id="1.20.1050.90">
    <property type="entry name" value="RecF/RecN/SMC, N-terminal domain"/>
    <property type="match status" value="1"/>
</dbReference>
<dbReference type="HAMAP" id="MF_00365">
    <property type="entry name" value="RecF"/>
    <property type="match status" value="1"/>
</dbReference>
<dbReference type="InterPro" id="IPR001238">
    <property type="entry name" value="DNA-binding_RecF"/>
</dbReference>
<dbReference type="InterPro" id="IPR018078">
    <property type="entry name" value="DNA-binding_RecF_CS"/>
</dbReference>
<dbReference type="InterPro" id="IPR027417">
    <property type="entry name" value="P-loop_NTPase"/>
</dbReference>
<dbReference type="InterPro" id="IPR003395">
    <property type="entry name" value="RecF/RecN/SMC_N"/>
</dbReference>
<dbReference type="InterPro" id="IPR042174">
    <property type="entry name" value="RecF_2"/>
</dbReference>
<dbReference type="NCBIfam" id="TIGR00611">
    <property type="entry name" value="recf"/>
    <property type="match status" value="1"/>
</dbReference>
<dbReference type="PANTHER" id="PTHR32182">
    <property type="entry name" value="DNA REPLICATION AND REPAIR PROTEIN RECF"/>
    <property type="match status" value="1"/>
</dbReference>
<dbReference type="PANTHER" id="PTHR32182:SF0">
    <property type="entry name" value="DNA REPLICATION AND REPAIR PROTEIN RECF"/>
    <property type="match status" value="1"/>
</dbReference>
<dbReference type="Pfam" id="PF02463">
    <property type="entry name" value="SMC_N"/>
    <property type="match status" value="1"/>
</dbReference>
<dbReference type="SUPFAM" id="SSF52540">
    <property type="entry name" value="P-loop containing nucleoside triphosphate hydrolases"/>
    <property type="match status" value="1"/>
</dbReference>
<dbReference type="PROSITE" id="PS00617">
    <property type="entry name" value="RECF_1"/>
    <property type="match status" value="1"/>
</dbReference>
<dbReference type="PROSITE" id="PS00618">
    <property type="entry name" value="RECF_2"/>
    <property type="match status" value="1"/>
</dbReference>
<accession>B5EYB2</accession>
<gene>
    <name evidence="1" type="primary">recF</name>
    <name type="ordered locus">SeAg_B4064</name>
</gene>
<proteinExistence type="inferred from homology"/>
<feature type="chain" id="PRO_1000121146" description="DNA replication and repair protein RecF">
    <location>
        <begin position="1"/>
        <end position="357"/>
    </location>
</feature>
<feature type="binding site" evidence="1">
    <location>
        <begin position="30"/>
        <end position="37"/>
    </location>
    <ligand>
        <name>ATP</name>
        <dbReference type="ChEBI" id="CHEBI:30616"/>
    </ligand>
</feature>